<reference key="1">
    <citation type="journal article" date="1994" name="FEMS Microbiol. Lett.">
        <title>Identification and nucleotide sequence of Brucella melitensis L7/L12 ribosomal protein.</title>
        <authorList>
            <person name="Bachrach G."/>
            <person name="Bar-Nir D."/>
            <person name="Banai M."/>
            <person name="Bercovier H."/>
        </authorList>
    </citation>
    <scope>NUCLEOTIDE SEQUENCE [GENOMIC DNA]</scope>
    <source>
        <strain>ATCC 23456 / CCUG 17765 / NCTC 10094 / 16M</strain>
    </source>
</reference>
<reference key="2">
    <citation type="journal article" date="2002" name="Proc. Natl. Acad. Sci. U.S.A.">
        <title>The genome sequence of the facultative intracellular pathogen Brucella melitensis.</title>
        <authorList>
            <person name="DelVecchio V.G."/>
            <person name="Kapatral V."/>
            <person name="Redkar R.J."/>
            <person name="Patra G."/>
            <person name="Mujer C."/>
            <person name="Los T."/>
            <person name="Ivanova N."/>
            <person name="Anderson I."/>
            <person name="Bhattacharyya A."/>
            <person name="Lykidis A."/>
            <person name="Reznik G."/>
            <person name="Jablonski L."/>
            <person name="Larsen N."/>
            <person name="D'Souza M."/>
            <person name="Bernal A."/>
            <person name="Mazur M."/>
            <person name="Goltsman E."/>
            <person name="Selkov E."/>
            <person name="Elzer P.H."/>
            <person name="Hagius S."/>
            <person name="O'Callaghan D."/>
            <person name="Letesson J.-J."/>
            <person name="Haselkorn R."/>
            <person name="Kyrpides N.C."/>
            <person name="Overbeek R."/>
        </authorList>
    </citation>
    <scope>NUCLEOTIDE SEQUENCE [LARGE SCALE GENOMIC DNA]</scope>
    <source>
        <strain>ATCC 23456 / CCUG 17765 / NCTC 10094 / 16M</strain>
    </source>
</reference>
<protein>
    <recommendedName>
        <fullName evidence="1">Large ribosomal subunit protein bL12</fullName>
    </recommendedName>
    <alternativeName>
        <fullName evidence="2">50S ribosomal protein L7/L12</fullName>
    </alternativeName>
</protein>
<proteinExistence type="inferred from homology"/>
<gene>
    <name evidence="1" type="primary">rplL</name>
    <name type="ordered locus">BMEI0748</name>
</gene>
<comment type="function">
    <text evidence="1">Forms part of the ribosomal stalk which helps the ribosome interact with GTP-bound translation factors. Is thus essential for accurate translation.</text>
</comment>
<comment type="subunit">
    <text evidence="1">Homodimer. Part of the ribosomal stalk of the 50S ribosomal subunit. Forms a multimeric L10(L12)X complex, where L10 forms an elongated spine to which 2 to 4 L12 dimers bind in a sequential fashion. Binds GTP-bound translation factors.</text>
</comment>
<comment type="similarity">
    <text evidence="1">Belongs to the bacterial ribosomal protein bL12 family.</text>
</comment>
<dbReference type="EMBL" id="L27819">
    <property type="protein sequence ID" value="AAA56790.1"/>
    <property type="molecule type" value="Genomic_DNA"/>
</dbReference>
<dbReference type="EMBL" id="AE008917">
    <property type="protein sequence ID" value="AAL51929.1"/>
    <property type="molecule type" value="Genomic_DNA"/>
</dbReference>
<dbReference type="PIR" id="AF3345">
    <property type="entry name" value="AF3345"/>
</dbReference>
<dbReference type="PIR" id="I40350">
    <property type="entry name" value="I40350"/>
</dbReference>
<dbReference type="RefSeq" id="WP_002964371.1">
    <property type="nucleotide sequence ID" value="NZ_GG703780.1"/>
</dbReference>
<dbReference type="SMR" id="P0A468"/>
<dbReference type="GeneID" id="97533516"/>
<dbReference type="KEGG" id="bme:BMEI0748"/>
<dbReference type="KEGG" id="bmel:DK63_674"/>
<dbReference type="PATRIC" id="fig|224914.52.peg.705"/>
<dbReference type="eggNOG" id="COG0222">
    <property type="taxonomic scope" value="Bacteria"/>
</dbReference>
<dbReference type="PhylomeDB" id="P0A468"/>
<dbReference type="Proteomes" id="UP000000419">
    <property type="component" value="Chromosome I"/>
</dbReference>
<dbReference type="GO" id="GO:0022625">
    <property type="term" value="C:cytosolic large ribosomal subunit"/>
    <property type="evidence" value="ECO:0007669"/>
    <property type="project" value="TreeGrafter"/>
</dbReference>
<dbReference type="GO" id="GO:0003729">
    <property type="term" value="F:mRNA binding"/>
    <property type="evidence" value="ECO:0007669"/>
    <property type="project" value="TreeGrafter"/>
</dbReference>
<dbReference type="GO" id="GO:0003735">
    <property type="term" value="F:structural constituent of ribosome"/>
    <property type="evidence" value="ECO:0007669"/>
    <property type="project" value="InterPro"/>
</dbReference>
<dbReference type="GO" id="GO:0006412">
    <property type="term" value="P:translation"/>
    <property type="evidence" value="ECO:0007669"/>
    <property type="project" value="UniProtKB-UniRule"/>
</dbReference>
<dbReference type="CDD" id="cd00387">
    <property type="entry name" value="Ribosomal_L7_L12"/>
    <property type="match status" value="1"/>
</dbReference>
<dbReference type="FunFam" id="3.30.1390.10:FF:000001">
    <property type="entry name" value="50S ribosomal protein L7/L12"/>
    <property type="match status" value="1"/>
</dbReference>
<dbReference type="Gene3D" id="3.30.1390.10">
    <property type="match status" value="1"/>
</dbReference>
<dbReference type="Gene3D" id="1.20.5.710">
    <property type="entry name" value="Single helix bin"/>
    <property type="match status" value="1"/>
</dbReference>
<dbReference type="HAMAP" id="MF_00368">
    <property type="entry name" value="Ribosomal_bL12"/>
    <property type="match status" value="1"/>
</dbReference>
<dbReference type="InterPro" id="IPR000206">
    <property type="entry name" value="Ribosomal_bL12"/>
</dbReference>
<dbReference type="InterPro" id="IPR013823">
    <property type="entry name" value="Ribosomal_bL12_C"/>
</dbReference>
<dbReference type="InterPro" id="IPR014719">
    <property type="entry name" value="Ribosomal_bL12_C/ClpS-like"/>
</dbReference>
<dbReference type="InterPro" id="IPR008932">
    <property type="entry name" value="Ribosomal_bL12_oligo"/>
</dbReference>
<dbReference type="InterPro" id="IPR036235">
    <property type="entry name" value="Ribosomal_bL12_oligo_N_sf"/>
</dbReference>
<dbReference type="NCBIfam" id="TIGR00855">
    <property type="entry name" value="L12"/>
    <property type="match status" value="1"/>
</dbReference>
<dbReference type="PANTHER" id="PTHR45987">
    <property type="entry name" value="39S RIBOSOMAL PROTEIN L12"/>
    <property type="match status" value="1"/>
</dbReference>
<dbReference type="PANTHER" id="PTHR45987:SF4">
    <property type="entry name" value="LARGE RIBOSOMAL SUBUNIT PROTEIN BL12M"/>
    <property type="match status" value="1"/>
</dbReference>
<dbReference type="Pfam" id="PF00542">
    <property type="entry name" value="Ribosomal_L12"/>
    <property type="match status" value="1"/>
</dbReference>
<dbReference type="Pfam" id="PF16320">
    <property type="entry name" value="Ribosomal_L12_N"/>
    <property type="match status" value="1"/>
</dbReference>
<dbReference type="SUPFAM" id="SSF54736">
    <property type="entry name" value="ClpS-like"/>
    <property type="match status" value="1"/>
</dbReference>
<dbReference type="SUPFAM" id="SSF48300">
    <property type="entry name" value="Ribosomal protein L7/12, oligomerisation (N-terminal) domain"/>
    <property type="match status" value="1"/>
</dbReference>
<keyword id="KW-0687">Ribonucleoprotein</keyword>
<keyword id="KW-0689">Ribosomal protein</keyword>
<evidence type="ECO:0000255" key="1">
    <source>
        <dbReference type="HAMAP-Rule" id="MF_00368"/>
    </source>
</evidence>
<evidence type="ECO:0000305" key="2"/>
<sequence>MADLAKIVEDLSALTVLEAAELSKLLEEKWGVSAAAPVAVAAAGGAAPAAAAEEKTEFDVVLADGGANKINVIKEVRALTGLGLKEAKDLVEGAPKAVKEGASKDEAEKIKAQLEAAGAKVELK</sequence>
<feature type="chain" id="PRO_0000157508" description="Large ribosomal subunit protein bL12">
    <location>
        <begin position="1"/>
        <end position="124"/>
    </location>
</feature>
<name>RL7_BRUME</name>
<organism>
    <name type="scientific">Brucella melitensis biotype 1 (strain ATCC 23456 / CCUG 17765 / NCTC 10094 / 16M)</name>
    <dbReference type="NCBI Taxonomy" id="224914"/>
    <lineage>
        <taxon>Bacteria</taxon>
        <taxon>Pseudomonadati</taxon>
        <taxon>Pseudomonadota</taxon>
        <taxon>Alphaproteobacteria</taxon>
        <taxon>Hyphomicrobiales</taxon>
        <taxon>Brucellaceae</taxon>
        <taxon>Brucella/Ochrobactrum group</taxon>
        <taxon>Brucella</taxon>
    </lineage>
</organism>
<accession>P0A468</accession>
<accession>P41106</accession>
<accession>Q9R2F1</accession>